<feature type="chain" id="PRO_0000373023" description="Protein PB1-F2">
    <location>
        <begin position="1"/>
        <end position="57"/>
    </location>
</feature>
<feature type="region of interest" description="Disordered" evidence="2">
    <location>
        <begin position="1"/>
        <end position="36"/>
    </location>
</feature>
<feature type="compositionally biased region" description="Polar residues" evidence="2">
    <location>
        <begin position="1"/>
        <end position="19"/>
    </location>
</feature>
<feature type="compositionally biased region" description="Basic and acidic residues" evidence="2">
    <location>
        <begin position="20"/>
        <end position="34"/>
    </location>
</feature>
<evidence type="ECO:0000255" key="1">
    <source>
        <dbReference type="HAMAP-Rule" id="MF_04064"/>
    </source>
</evidence>
<evidence type="ECO:0000256" key="2">
    <source>
        <dbReference type="SAM" id="MobiDB-lite"/>
    </source>
</evidence>
<gene>
    <name evidence="1" type="primary">PB1</name>
    <name type="synonym">PB1-F2</name>
</gene>
<keyword id="KW-1035">Host cytoplasm</keyword>
<keyword id="KW-1048">Host nucleus</keyword>
<organismHost>
    <name type="scientific">Aves</name>
    <dbReference type="NCBI Taxonomy" id="8782"/>
</organismHost>
<organismHost>
    <name type="scientific">Homo sapiens</name>
    <name type="common">Human</name>
    <dbReference type="NCBI Taxonomy" id="9606"/>
</organismHost>
<organismHost>
    <name type="scientific">Sus scrofa</name>
    <name type="common">Pig</name>
    <dbReference type="NCBI Taxonomy" id="9823"/>
</organismHost>
<proteinExistence type="inferred from homology"/>
<accession>A4GCK6</accession>
<comment type="function">
    <text evidence="1">May play an important role in promoting lung pathology in both primary viral infection and secondary bacterial infection.</text>
</comment>
<comment type="subcellular location">
    <subcellularLocation>
        <location evidence="1">Host nucleus</location>
    </subcellularLocation>
    <subcellularLocation>
        <location evidence="1">Host cytoplasm</location>
        <location evidence="1">Host cytosol</location>
    </subcellularLocation>
</comment>
<comment type="miscellaneous">
    <text>Is not encoded in all strains, and seems to be dispensable for replication.</text>
</comment>
<comment type="similarity">
    <text evidence="1">Belongs to the influenza viruses PB1-F2 family.</text>
</comment>
<organism>
    <name type="scientific">Influenza A virus (strain A/India/6263/1980 H1N1)</name>
    <dbReference type="NCBI Taxonomy" id="393562"/>
    <lineage>
        <taxon>Viruses</taxon>
        <taxon>Riboviria</taxon>
        <taxon>Orthornavirae</taxon>
        <taxon>Negarnaviricota</taxon>
        <taxon>Polyploviricotina</taxon>
        <taxon>Insthoviricetes</taxon>
        <taxon>Articulavirales</taxon>
        <taxon>Orthomyxoviridae</taxon>
        <taxon>Alphainfluenzavirus</taxon>
        <taxon>Alphainfluenzavirus influenzae</taxon>
        <taxon>Influenza A virus</taxon>
    </lineage>
</organism>
<protein>
    <recommendedName>
        <fullName evidence="1">Protein PB1-F2</fullName>
    </recommendedName>
</protein>
<sequence>MGQEQGTPWIQSTGHISTQKGEDGQKTPKLEHRNSTRLMGHYQKTMNQVVMPKQIVY</sequence>
<reference key="1">
    <citation type="submission" date="2007-03" db="EMBL/GenBank/DDBJ databases">
        <title>The NIAID influenza genome sequencing project.</title>
        <authorList>
            <person name="Ghedin E."/>
            <person name="Spiro D."/>
            <person name="Miller N."/>
            <person name="Zaborsky J."/>
            <person name="Feldblyum T."/>
            <person name="Subbu V."/>
            <person name="Shumway M."/>
            <person name="Sparenborg J."/>
            <person name="Groveman L."/>
            <person name="Halpin R."/>
            <person name="Sitz J."/>
            <person name="Koo H."/>
            <person name="Salzberg S.L."/>
            <person name="Webster R.G."/>
            <person name="Hoffmann E."/>
            <person name="Krauss S."/>
            <person name="Naeve C."/>
            <person name="Bao Y."/>
            <person name="Bolotov P."/>
            <person name="Dernovoy D."/>
            <person name="Kiryutin B."/>
            <person name="Lipman D.J."/>
            <person name="Tatusova T."/>
        </authorList>
    </citation>
    <scope>NUCLEOTIDE SEQUENCE [GENOMIC RNA]</scope>
</reference>
<reference key="2">
    <citation type="submission" date="2007-03" db="EMBL/GenBank/DDBJ databases">
        <authorList>
            <consortium name="The NIAID Influenza Genome Sequencing Consortium"/>
        </authorList>
    </citation>
    <scope>NUCLEOTIDE SEQUENCE [GENOMIC RNA]</scope>
</reference>
<name>PB1F2_I80AA</name>
<dbReference type="EMBL" id="CY020459">
    <property type="protein sequence ID" value="ABO38371.1"/>
    <property type="molecule type" value="Viral_cRNA"/>
</dbReference>
<dbReference type="SMR" id="A4GCK6"/>
<dbReference type="Proteomes" id="UP000008580">
    <property type="component" value="Genome"/>
</dbReference>
<dbReference type="GO" id="GO:0044164">
    <property type="term" value="C:host cell cytosol"/>
    <property type="evidence" value="ECO:0007669"/>
    <property type="project" value="UniProtKB-SubCell"/>
</dbReference>
<dbReference type="GO" id="GO:0042025">
    <property type="term" value="C:host cell nucleus"/>
    <property type="evidence" value="ECO:0007669"/>
    <property type="project" value="UniProtKB-SubCell"/>
</dbReference>
<dbReference type="GO" id="GO:0016020">
    <property type="term" value="C:membrane"/>
    <property type="evidence" value="ECO:0007669"/>
    <property type="project" value="UniProtKB-UniRule"/>
</dbReference>
<dbReference type="GO" id="GO:0039545">
    <property type="term" value="P:symbiont-mediated suppression of host cytoplasmic pattern recognition receptor signaling pathway via inhibition of MAVS activity"/>
    <property type="evidence" value="ECO:0000250"/>
    <property type="project" value="UniProtKB"/>
</dbReference>
<dbReference type="HAMAP" id="MF_04064">
    <property type="entry name" value="INFV_PB1F2"/>
    <property type="match status" value="1"/>
</dbReference>
<dbReference type="InterPro" id="IPR021045">
    <property type="entry name" value="Flu_proapoptotic_PB1-F2"/>
</dbReference>
<dbReference type="Pfam" id="PF11986">
    <property type="entry name" value="PB1-F2"/>
    <property type="match status" value="1"/>
</dbReference>